<proteinExistence type="inferred from homology"/>
<dbReference type="EC" id="7.1.2.2" evidence="1"/>
<dbReference type="EMBL" id="AY012419">
    <property type="protein sequence ID" value="AAK14674.1"/>
    <property type="molecule type" value="Genomic_DNA"/>
</dbReference>
<dbReference type="SMR" id="Q9BA84"/>
<dbReference type="GO" id="GO:0009535">
    <property type="term" value="C:chloroplast thylakoid membrane"/>
    <property type="evidence" value="ECO:0007669"/>
    <property type="project" value="UniProtKB-SubCell"/>
</dbReference>
<dbReference type="GO" id="GO:0005739">
    <property type="term" value="C:mitochondrion"/>
    <property type="evidence" value="ECO:0007669"/>
    <property type="project" value="GOC"/>
</dbReference>
<dbReference type="GO" id="GO:0045259">
    <property type="term" value="C:proton-transporting ATP synthase complex"/>
    <property type="evidence" value="ECO:0007669"/>
    <property type="project" value="UniProtKB-KW"/>
</dbReference>
<dbReference type="GO" id="GO:0005524">
    <property type="term" value="F:ATP binding"/>
    <property type="evidence" value="ECO:0007669"/>
    <property type="project" value="UniProtKB-UniRule"/>
</dbReference>
<dbReference type="GO" id="GO:0016887">
    <property type="term" value="F:ATP hydrolysis activity"/>
    <property type="evidence" value="ECO:0007669"/>
    <property type="project" value="InterPro"/>
</dbReference>
<dbReference type="GO" id="GO:0046933">
    <property type="term" value="F:proton-transporting ATP synthase activity, rotational mechanism"/>
    <property type="evidence" value="ECO:0007669"/>
    <property type="project" value="UniProtKB-UniRule"/>
</dbReference>
<dbReference type="GO" id="GO:0042776">
    <property type="term" value="P:proton motive force-driven mitochondrial ATP synthesis"/>
    <property type="evidence" value="ECO:0007669"/>
    <property type="project" value="TreeGrafter"/>
</dbReference>
<dbReference type="CDD" id="cd18110">
    <property type="entry name" value="ATP-synt_F1_beta_C"/>
    <property type="match status" value="1"/>
</dbReference>
<dbReference type="CDD" id="cd18115">
    <property type="entry name" value="ATP-synt_F1_beta_N"/>
    <property type="match status" value="1"/>
</dbReference>
<dbReference type="CDD" id="cd01133">
    <property type="entry name" value="F1-ATPase_beta_CD"/>
    <property type="match status" value="1"/>
</dbReference>
<dbReference type="FunFam" id="1.10.1140.10:FF:000001">
    <property type="entry name" value="ATP synthase subunit beta"/>
    <property type="match status" value="1"/>
</dbReference>
<dbReference type="FunFam" id="3.40.50.300:FF:000004">
    <property type="entry name" value="ATP synthase subunit beta"/>
    <property type="match status" value="1"/>
</dbReference>
<dbReference type="FunFam" id="2.40.10.170:FF:000002">
    <property type="entry name" value="ATP synthase subunit beta, chloroplastic"/>
    <property type="match status" value="1"/>
</dbReference>
<dbReference type="Gene3D" id="2.40.10.170">
    <property type="match status" value="1"/>
</dbReference>
<dbReference type="Gene3D" id="1.10.1140.10">
    <property type="entry name" value="Bovine Mitochondrial F1-atpase, Atp Synthase Beta Chain, Chain D, domain 3"/>
    <property type="match status" value="1"/>
</dbReference>
<dbReference type="Gene3D" id="3.40.50.300">
    <property type="entry name" value="P-loop containing nucleotide triphosphate hydrolases"/>
    <property type="match status" value="1"/>
</dbReference>
<dbReference type="HAMAP" id="MF_01347">
    <property type="entry name" value="ATP_synth_beta_bact"/>
    <property type="match status" value="1"/>
</dbReference>
<dbReference type="InterPro" id="IPR003593">
    <property type="entry name" value="AAA+_ATPase"/>
</dbReference>
<dbReference type="InterPro" id="IPR055190">
    <property type="entry name" value="ATP-synt_VA_C"/>
</dbReference>
<dbReference type="InterPro" id="IPR005722">
    <property type="entry name" value="ATP_synth_F1_bsu"/>
</dbReference>
<dbReference type="InterPro" id="IPR020003">
    <property type="entry name" value="ATPase_a/bsu_AS"/>
</dbReference>
<dbReference type="InterPro" id="IPR050053">
    <property type="entry name" value="ATPase_alpha/beta_chains"/>
</dbReference>
<dbReference type="InterPro" id="IPR004100">
    <property type="entry name" value="ATPase_F1/V1/A1_a/bsu_N"/>
</dbReference>
<dbReference type="InterPro" id="IPR036121">
    <property type="entry name" value="ATPase_F1/V1/A1_a/bsu_N_sf"/>
</dbReference>
<dbReference type="InterPro" id="IPR000194">
    <property type="entry name" value="ATPase_F1/V1/A1_a/bsu_nucl-bd"/>
</dbReference>
<dbReference type="InterPro" id="IPR024034">
    <property type="entry name" value="ATPase_F1/V1_b/a_C"/>
</dbReference>
<dbReference type="InterPro" id="IPR027417">
    <property type="entry name" value="P-loop_NTPase"/>
</dbReference>
<dbReference type="NCBIfam" id="TIGR01039">
    <property type="entry name" value="atpD"/>
    <property type="match status" value="1"/>
</dbReference>
<dbReference type="PANTHER" id="PTHR15184">
    <property type="entry name" value="ATP SYNTHASE"/>
    <property type="match status" value="1"/>
</dbReference>
<dbReference type="PANTHER" id="PTHR15184:SF71">
    <property type="entry name" value="ATP SYNTHASE SUBUNIT BETA, MITOCHONDRIAL"/>
    <property type="match status" value="1"/>
</dbReference>
<dbReference type="Pfam" id="PF00006">
    <property type="entry name" value="ATP-synt_ab"/>
    <property type="match status" value="1"/>
</dbReference>
<dbReference type="Pfam" id="PF02874">
    <property type="entry name" value="ATP-synt_ab_N"/>
    <property type="match status" value="1"/>
</dbReference>
<dbReference type="Pfam" id="PF22919">
    <property type="entry name" value="ATP-synt_VA_C"/>
    <property type="match status" value="1"/>
</dbReference>
<dbReference type="SMART" id="SM00382">
    <property type="entry name" value="AAA"/>
    <property type="match status" value="1"/>
</dbReference>
<dbReference type="SUPFAM" id="SSF47917">
    <property type="entry name" value="C-terminal domain of alpha and beta subunits of F1 ATP synthase"/>
    <property type="match status" value="1"/>
</dbReference>
<dbReference type="SUPFAM" id="SSF50615">
    <property type="entry name" value="N-terminal domain of alpha and beta subunits of F1 ATP synthase"/>
    <property type="match status" value="1"/>
</dbReference>
<dbReference type="SUPFAM" id="SSF52540">
    <property type="entry name" value="P-loop containing nucleoside triphosphate hydrolases"/>
    <property type="match status" value="1"/>
</dbReference>
<dbReference type="PROSITE" id="PS00152">
    <property type="entry name" value="ATPASE_ALPHA_BETA"/>
    <property type="match status" value="1"/>
</dbReference>
<protein>
    <recommendedName>
        <fullName evidence="1">ATP synthase subunit beta, chloroplastic</fullName>
        <ecNumber evidence="1">7.1.2.2</ecNumber>
    </recommendedName>
    <alternativeName>
        <fullName evidence="1">ATP synthase F1 sector subunit beta</fullName>
    </alternativeName>
    <alternativeName>
        <fullName evidence="1">F-ATPase subunit beta</fullName>
    </alternativeName>
</protein>
<organism>
    <name type="scientific">Hyophorbe lagenicaulis</name>
    <name type="common">Bottle palm</name>
    <dbReference type="NCBI Taxonomy" id="115475"/>
    <lineage>
        <taxon>Eukaryota</taxon>
        <taxon>Viridiplantae</taxon>
        <taxon>Streptophyta</taxon>
        <taxon>Embryophyta</taxon>
        <taxon>Tracheophyta</taxon>
        <taxon>Spermatophyta</taxon>
        <taxon>Magnoliopsida</taxon>
        <taxon>Liliopsida</taxon>
        <taxon>Arecaceae</taxon>
        <taxon>Arecoideae</taxon>
        <taxon>Chamaedoreeae</taxon>
        <taxon>Hyophorbe</taxon>
    </lineage>
</organism>
<gene>
    <name evidence="1" type="primary">atpB</name>
</gene>
<keyword id="KW-0066">ATP synthesis</keyword>
<keyword id="KW-0067">ATP-binding</keyword>
<keyword id="KW-0139">CF(1)</keyword>
<keyword id="KW-0150">Chloroplast</keyword>
<keyword id="KW-0375">Hydrogen ion transport</keyword>
<keyword id="KW-0406">Ion transport</keyword>
<keyword id="KW-0472">Membrane</keyword>
<keyword id="KW-0547">Nucleotide-binding</keyword>
<keyword id="KW-0934">Plastid</keyword>
<keyword id="KW-0793">Thylakoid</keyword>
<keyword id="KW-1278">Translocase</keyword>
<keyword id="KW-0813">Transport</keyword>
<evidence type="ECO:0000255" key="1">
    <source>
        <dbReference type="HAMAP-Rule" id="MF_01347"/>
    </source>
</evidence>
<feature type="chain" id="PRO_0000144517" description="ATP synthase subunit beta, chloroplastic">
    <location>
        <begin position="1"/>
        <end position="498"/>
    </location>
</feature>
<feature type="binding site" evidence="1">
    <location>
        <begin position="172"/>
        <end position="179"/>
    </location>
    <ligand>
        <name>ATP</name>
        <dbReference type="ChEBI" id="CHEBI:30616"/>
    </ligand>
</feature>
<reference key="1">
    <citation type="journal article" date="2002" name="Syst. Biol.">
        <title>A molecular phylogenetic study of the Palmae (Arecaceae) based on atpB, rbcL, and 18S nrDNA sequences.</title>
        <authorList>
            <person name="Hahn W.J."/>
        </authorList>
    </citation>
    <scope>NUCLEOTIDE SEQUENCE [GENOMIC DNA]</scope>
</reference>
<geneLocation type="chloroplast"/>
<sequence>MRINPTTSSPVVSTLEEKNLGRIAQIIGPVLDVVFPPGKMPNIYNALVVKGRDTVGQQINVTCEVQQLLGNNRVRAVAMSATDGLMRGMEVIDTGAPLSVPVGGATLGRIFNVLGEPVDNLGPVDTRTTSPIHRSAPAFIQLDTKLSIFETGIKVVDLLAPYRRGGKIGLFGGAGVGKTVLIMELINNIAKAHGGVSVFGGVGERTREGNDLYMEMKESGVINEKNIAESKVALVYGQMNEPPGARMRVGLTALTMAEYFRDVNEQDVLLFIDNIFRFVQAGSEVSALLGRMPSAVGYQPTLSTEMGSLQERITSTKEGSITSIQAVYVPADDLTDPAPATTFAHLDATTVLSRVLAAKGIYPAVDPLDSTSTMLQPRIVGEEHYETAQRVKQTSQRYKELQDIIAILGLDELSEEDRLTVARARKIERFLSQPFFVAEVFTGSPGKYVGLAETIRGFQLILSGELDGLPEQAFYLVGNIDEATAKAMNLEVESKLNK</sequence>
<comment type="function">
    <text evidence="1">Produces ATP from ADP in the presence of a proton gradient across the membrane. The catalytic sites are hosted primarily by the beta subunits.</text>
</comment>
<comment type="catalytic activity">
    <reaction evidence="1">
        <text>ATP + H2O + 4 H(+)(in) = ADP + phosphate + 5 H(+)(out)</text>
        <dbReference type="Rhea" id="RHEA:57720"/>
        <dbReference type="ChEBI" id="CHEBI:15377"/>
        <dbReference type="ChEBI" id="CHEBI:15378"/>
        <dbReference type="ChEBI" id="CHEBI:30616"/>
        <dbReference type="ChEBI" id="CHEBI:43474"/>
        <dbReference type="ChEBI" id="CHEBI:456216"/>
        <dbReference type="EC" id="7.1.2.2"/>
    </reaction>
</comment>
<comment type="subunit">
    <text evidence="1">F-type ATPases have 2 components, CF(1) - the catalytic core - and CF(0) - the membrane proton channel. CF(1) has five subunits: alpha(3), beta(3), gamma(1), delta(1), epsilon(1). CF(0) has four main subunits: a(1), b(1), b'(1) and c(9-12).</text>
</comment>
<comment type="subcellular location">
    <subcellularLocation>
        <location evidence="1">Plastid</location>
        <location evidence="1">Chloroplast thylakoid membrane</location>
        <topology evidence="1">Peripheral membrane protein</topology>
    </subcellularLocation>
</comment>
<comment type="similarity">
    <text evidence="1">Belongs to the ATPase alpha/beta chains family.</text>
</comment>
<accession>Q9BA84</accession>
<name>ATPB_HYOLA</name>